<organism>
    <name type="scientific">Gossypium hirsutum</name>
    <name type="common">Upland cotton</name>
    <name type="synonym">Gossypium mexicanum</name>
    <dbReference type="NCBI Taxonomy" id="3635"/>
    <lineage>
        <taxon>Eukaryota</taxon>
        <taxon>Viridiplantae</taxon>
        <taxon>Streptophyta</taxon>
        <taxon>Embryophyta</taxon>
        <taxon>Tracheophyta</taxon>
        <taxon>Spermatophyta</taxon>
        <taxon>Magnoliopsida</taxon>
        <taxon>eudicotyledons</taxon>
        <taxon>Gunneridae</taxon>
        <taxon>Pentapetalae</taxon>
        <taxon>rosids</taxon>
        <taxon>malvids</taxon>
        <taxon>Malvales</taxon>
        <taxon>Malvaceae</taxon>
        <taxon>Malvoideae</taxon>
        <taxon>Gossypium</taxon>
    </lineage>
</organism>
<reference key="1">
    <citation type="submission" date="2001-03" db="EMBL/GenBank/DDBJ databases">
        <title>Identification and expression of mRNA transcripts in growing cotton fiber cells by fluorescent differential display.</title>
        <authorList>
            <person name="Zhao G.R."/>
            <person name="Zhao J.Y."/>
        </authorList>
    </citation>
    <scope>NUCLEOTIDE SEQUENCE [MRNA]</scope>
    <source>
        <tissue>Fiber</tissue>
    </source>
</reference>
<reference key="2">
    <citation type="journal article" date="2014" name="Plant Physiol.">
        <title>Functional and evolutionary analysis of the CASPARIAN STRIP MEMBRANE DOMAIN PROTEIN family.</title>
        <authorList>
            <person name="Roppolo D."/>
            <person name="Boeckmann B."/>
            <person name="Pfister A."/>
            <person name="Boutet E."/>
            <person name="Rubio M.C."/>
            <person name="Denervaud-Tendon V."/>
            <person name="Vermeer J.E."/>
            <person name="Gheyselinck J."/>
            <person name="Xenarios I."/>
            <person name="Geldner N."/>
        </authorList>
    </citation>
    <scope>GENE FAMILY</scope>
    <scope>NOMENCLATURE</scope>
</reference>
<proteinExistence type="evidence at transcript level"/>
<protein>
    <recommendedName>
        <fullName>CASP-like protein F16</fullName>
    </recommendedName>
    <alternativeName>
        <fullName>CASP-like protein 2A1</fullName>
        <shortName>GhCASPL2A1</shortName>
    </alternativeName>
</protein>
<dbReference type="EMBL" id="AJ311664">
    <property type="protein sequence ID" value="CAC84114.1"/>
    <property type="molecule type" value="mRNA"/>
</dbReference>
<dbReference type="RefSeq" id="NP_001314280.1">
    <property type="nucleotide sequence ID" value="NM_001327351.1"/>
</dbReference>
<dbReference type="STRING" id="3635.Q8W4Z5"/>
<dbReference type="PaxDb" id="3635-Q8W4Z5"/>
<dbReference type="GeneID" id="107932682"/>
<dbReference type="KEGG" id="ghi:107932682"/>
<dbReference type="OrthoDB" id="33213at41938"/>
<dbReference type="Proteomes" id="UP000189702">
    <property type="component" value="Unplaced"/>
</dbReference>
<dbReference type="GO" id="GO:0005886">
    <property type="term" value="C:plasma membrane"/>
    <property type="evidence" value="ECO:0007669"/>
    <property type="project" value="UniProtKB-SubCell"/>
</dbReference>
<dbReference type="GO" id="GO:0090376">
    <property type="term" value="P:seed trichome differentiation"/>
    <property type="evidence" value="ECO:0000270"/>
    <property type="project" value="AgBase"/>
</dbReference>
<dbReference type="InterPro" id="IPR006459">
    <property type="entry name" value="CASP/CASPL"/>
</dbReference>
<dbReference type="InterPro" id="IPR006702">
    <property type="entry name" value="CASP_dom"/>
</dbReference>
<dbReference type="NCBIfam" id="TIGR01569">
    <property type="entry name" value="A_tha_TIGR01569"/>
    <property type="match status" value="1"/>
</dbReference>
<dbReference type="PANTHER" id="PTHR33573:SF46">
    <property type="entry name" value="CASP-LIKE PROTEIN 2A1"/>
    <property type="match status" value="1"/>
</dbReference>
<dbReference type="PANTHER" id="PTHR33573">
    <property type="entry name" value="CASP-LIKE PROTEIN 4A4"/>
    <property type="match status" value="1"/>
</dbReference>
<dbReference type="Pfam" id="PF04535">
    <property type="entry name" value="CASP_dom"/>
    <property type="match status" value="1"/>
</dbReference>
<gene>
    <name type="primary">F16</name>
</gene>
<comment type="subunit">
    <text evidence="1">Homodimer and heterodimers.</text>
</comment>
<comment type="subcellular location">
    <subcellularLocation>
        <location evidence="1">Cell membrane</location>
        <topology evidence="1">Multi-pass membrane protein</topology>
    </subcellularLocation>
</comment>
<comment type="similarity">
    <text evidence="4">Belongs to the Casparian strip membrane proteins (CASP) family.</text>
</comment>
<keyword id="KW-1003">Cell membrane</keyword>
<keyword id="KW-0472">Membrane</keyword>
<keyword id="KW-1185">Reference proteome</keyword>
<keyword id="KW-0812">Transmembrane</keyword>
<keyword id="KW-1133">Transmembrane helix</keyword>
<sequence>MEKSEKGNGVAPATRSPMALMGSSRNENQEVNTSMRTAETMLRLVPMALGVAALVVMLKNSQSNDFGSVSYSDLGAFRYLVHANGICAGYSLLSAIIAAVPSPSTMPRAWTFFLLDQILTYVILGAAAVSTEVLYLANKGDSAITWSAACGTFAGFCHKATIAVVITFVAVICYAVLSLVSSYRLFTKFDAPVNYPSKTIEATVFHG</sequence>
<evidence type="ECO:0000250" key="1"/>
<evidence type="ECO:0000255" key="2"/>
<evidence type="ECO:0000256" key="3">
    <source>
        <dbReference type="SAM" id="MobiDB-lite"/>
    </source>
</evidence>
<evidence type="ECO:0000305" key="4"/>
<name>CSPL1_GOSHI</name>
<feature type="chain" id="PRO_0000370721" description="CASP-like protein F16">
    <location>
        <begin position="1"/>
        <end position="207"/>
    </location>
</feature>
<feature type="topological domain" description="Cytoplasmic" evidence="2">
    <location>
        <begin position="1"/>
        <end position="37"/>
    </location>
</feature>
<feature type="transmembrane region" description="Helical" evidence="2">
    <location>
        <begin position="38"/>
        <end position="58"/>
    </location>
</feature>
<feature type="topological domain" description="Extracellular" evidence="2">
    <location>
        <begin position="59"/>
        <end position="79"/>
    </location>
</feature>
<feature type="transmembrane region" description="Helical" evidence="2">
    <location>
        <begin position="80"/>
        <end position="100"/>
    </location>
</feature>
<feature type="topological domain" description="Cytoplasmic" evidence="2">
    <location>
        <begin position="101"/>
        <end position="108"/>
    </location>
</feature>
<feature type="transmembrane region" description="Helical" evidence="2">
    <location>
        <begin position="109"/>
        <end position="129"/>
    </location>
</feature>
<feature type="topological domain" description="Extracellular" evidence="2">
    <location>
        <begin position="130"/>
        <end position="159"/>
    </location>
</feature>
<feature type="transmembrane region" description="Helical" evidence="2">
    <location>
        <begin position="160"/>
        <end position="180"/>
    </location>
</feature>
<feature type="topological domain" description="Cytoplasmic" evidence="2">
    <location>
        <begin position="181"/>
        <end position="207"/>
    </location>
</feature>
<feature type="region of interest" description="Disordered" evidence="3">
    <location>
        <begin position="1"/>
        <end position="30"/>
    </location>
</feature>
<accession>Q8W4Z5</accession>